<feature type="chain" id="PRO_0000254814" description="Cytochrome b">
    <location>
        <begin position="1"/>
        <end position="380"/>
    </location>
</feature>
<feature type="transmembrane region" description="Helical" evidence="2">
    <location>
        <begin position="33"/>
        <end position="53"/>
    </location>
</feature>
<feature type="transmembrane region" description="Helical" evidence="2">
    <location>
        <begin position="77"/>
        <end position="98"/>
    </location>
</feature>
<feature type="transmembrane region" description="Helical" evidence="2">
    <location>
        <begin position="113"/>
        <end position="133"/>
    </location>
</feature>
<feature type="transmembrane region" description="Helical" evidence="2">
    <location>
        <begin position="178"/>
        <end position="198"/>
    </location>
</feature>
<feature type="transmembrane region" description="Helical" evidence="2">
    <location>
        <begin position="226"/>
        <end position="246"/>
    </location>
</feature>
<feature type="transmembrane region" description="Helical" evidence="2">
    <location>
        <begin position="288"/>
        <end position="308"/>
    </location>
</feature>
<feature type="transmembrane region" description="Helical" evidence="2">
    <location>
        <begin position="320"/>
        <end position="340"/>
    </location>
</feature>
<feature type="transmembrane region" description="Helical" evidence="2">
    <location>
        <begin position="347"/>
        <end position="367"/>
    </location>
</feature>
<feature type="binding site" description="axial binding residue" evidence="2">
    <location>
        <position position="83"/>
    </location>
    <ligand>
        <name>heme b</name>
        <dbReference type="ChEBI" id="CHEBI:60344"/>
        <label>b562</label>
    </ligand>
    <ligandPart>
        <name>Fe</name>
        <dbReference type="ChEBI" id="CHEBI:18248"/>
    </ligandPart>
</feature>
<feature type="binding site" description="axial binding residue" evidence="2">
    <location>
        <position position="97"/>
    </location>
    <ligand>
        <name>heme b</name>
        <dbReference type="ChEBI" id="CHEBI:60344"/>
        <label>b566</label>
    </ligand>
    <ligandPart>
        <name>Fe</name>
        <dbReference type="ChEBI" id="CHEBI:18248"/>
    </ligandPart>
</feature>
<feature type="binding site" description="axial binding residue" evidence="2">
    <location>
        <position position="182"/>
    </location>
    <ligand>
        <name>heme b</name>
        <dbReference type="ChEBI" id="CHEBI:60344"/>
        <label>b562</label>
    </ligand>
    <ligandPart>
        <name>Fe</name>
        <dbReference type="ChEBI" id="CHEBI:18248"/>
    </ligandPart>
</feature>
<feature type="binding site" description="axial binding residue" evidence="2">
    <location>
        <position position="196"/>
    </location>
    <ligand>
        <name>heme b</name>
        <dbReference type="ChEBI" id="CHEBI:60344"/>
        <label>b566</label>
    </ligand>
    <ligandPart>
        <name>Fe</name>
        <dbReference type="ChEBI" id="CHEBI:18248"/>
    </ligandPart>
</feature>
<feature type="binding site" evidence="2">
    <location>
        <position position="201"/>
    </location>
    <ligand>
        <name>a ubiquinone</name>
        <dbReference type="ChEBI" id="CHEBI:16389"/>
    </ligand>
</feature>
<accession>Q6IYG6</accession>
<organism>
    <name type="scientific">Macaca mulatta</name>
    <name type="common">Rhesus macaque</name>
    <dbReference type="NCBI Taxonomy" id="9544"/>
    <lineage>
        <taxon>Eukaryota</taxon>
        <taxon>Metazoa</taxon>
        <taxon>Chordata</taxon>
        <taxon>Craniata</taxon>
        <taxon>Vertebrata</taxon>
        <taxon>Euteleostomi</taxon>
        <taxon>Mammalia</taxon>
        <taxon>Eutheria</taxon>
        <taxon>Euarchontoglires</taxon>
        <taxon>Primates</taxon>
        <taxon>Haplorrhini</taxon>
        <taxon>Catarrhini</taxon>
        <taxon>Cercopithecidae</taxon>
        <taxon>Cercopithecinae</taxon>
        <taxon>Macaca</taxon>
    </lineage>
</organism>
<reference key="1">
    <citation type="journal article" date="2004" name="Aging Cell">
        <title>Molecular analyses of mtDNA deletion mutations in microdissected skeletal muscle fibers from aged rhesus monkeys.</title>
        <authorList>
            <person name="Gokey N.G."/>
            <person name="Cao Z."/>
            <person name="Pak J.W."/>
            <person name="Lee D."/>
            <person name="McKiernan S.H."/>
            <person name="McKenzie D."/>
            <person name="Weindruch R."/>
            <person name="Aiken J.M."/>
        </authorList>
    </citation>
    <scope>NUCLEOTIDE SEQUENCE [LARGE SCALE GENOMIC DNA]</scope>
    <source>
        <strain evidence="5">17573</strain>
    </source>
</reference>
<gene>
    <name type="primary">MT-CYB</name>
    <name type="synonym">COB</name>
    <name type="synonym">CYTB</name>
    <name type="synonym">MTCYB</name>
</gene>
<proteinExistence type="inferred from homology"/>
<evidence type="ECO:0000250" key="1"/>
<evidence type="ECO:0000250" key="2">
    <source>
        <dbReference type="UniProtKB" id="P00157"/>
    </source>
</evidence>
<evidence type="ECO:0000255" key="3">
    <source>
        <dbReference type="PROSITE-ProRule" id="PRU00967"/>
    </source>
</evidence>
<evidence type="ECO:0000255" key="4">
    <source>
        <dbReference type="PROSITE-ProRule" id="PRU00968"/>
    </source>
</evidence>
<evidence type="ECO:0000312" key="5">
    <source>
        <dbReference type="Proteomes" id="UP000006718"/>
    </source>
</evidence>
<geneLocation type="mitochondrion"/>
<comment type="function">
    <text evidence="2">Component of the ubiquinol-cytochrome c reductase complex (complex III or cytochrome b-c1 complex) that is part of the mitochondrial respiratory chain. The b-c1 complex mediates electron transfer from ubiquinol to cytochrome c. Contributes to the generation of a proton gradient across the mitochondrial membrane that is then used for ATP synthesis.</text>
</comment>
<comment type="cofactor">
    <cofactor evidence="2">
        <name>heme b</name>
        <dbReference type="ChEBI" id="CHEBI:60344"/>
    </cofactor>
    <text evidence="2">Binds 2 heme b groups non-covalently.</text>
</comment>
<comment type="subunit">
    <text evidence="2">The cytochrome bc1 complex contains 11 subunits: 3 respiratory subunits (MT-CYB, CYC1 and UQCRFS1), 2 core proteins (UQCRC1 and UQCRC2) and 6 low-molecular weight proteins (UQCRH/QCR6, UQCRB/QCR7, UQCRQ/QCR8, UQCR10/QCR9, UQCR11/QCR10 and a cleavage product of UQCRFS1). This cytochrome bc1 complex then forms a dimer.</text>
</comment>
<comment type="subcellular location">
    <subcellularLocation>
        <location evidence="2">Mitochondrion inner membrane</location>
        <topology evidence="2">Multi-pass membrane protein</topology>
    </subcellularLocation>
</comment>
<comment type="miscellaneous">
    <text evidence="1">Heme 1 (or BL or b562) is low-potential and absorbs at about 562 nm, and heme 2 (or BH or b566) is high-potential and absorbs at about 566 nm.</text>
</comment>
<comment type="similarity">
    <text evidence="3 4">Belongs to the cytochrome b family.</text>
</comment>
<comment type="caution">
    <text evidence="2">The full-length protein contains only eight transmembrane helices, not nine as predicted by bioinformatics tools.</text>
</comment>
<protein>
    <recommendedName>
        <fullName>Cytochrome b</fullName>
    </recommendedName>
    <alternativeName>
        <fullName>Complex III subunit 3</fullName>
    </alternativeName>
    <alternativeName>
        <fullName>Complex III subunit III</fullName>
    </alternativeName>
    <alternativeName>
        <fullName>Cytochrome b-c1 complex subunit 3</fullName>
    </alternativeName>
    <alternativeName>
        <fullName>Ubiquinol-cytochrome-c reductase complex cytochrome b subunit</fullName>
    </alternativeName>
</protein>
<sequence length="380" mass="42882">MTPMRKSNPILKMINRSFIDLPAPPNLSMWWNFGSLLAACLILQIITGLLLAMHYSPDTSSAFSSIAHITRDVKYGWITRYLHANGASMLFICLFLHIGRGLYYGSYLLLETWNIGIMLLLMTMTTAFMGYVLPWGQMSFWGATVITNLLSAIPYIGTNLVQWIWGGYAIDSPTLTRFFTLHFILPFIIIALTTVHLLFLHETGSNNPCGISSDSDKIAFHPYYTTKDILGLVLLLFILATLTLLSPNLLNDPDNYIPADPLNTPPHIKPEWYFLFAYTILRSIPNKLGGVLALFLSILILAAIPMLHKSKQQSMMFRPLSQFLFWLLITILLTLTWIGSEPVVQPLTTIGQVASMMYFITILILMPLASLIENNLLKWT</sequence>
<keyword id="KW-0249">Electron transport</keyword>
<keyword id="KW-0349">Heme</keyword>
<keyword id="KW-0408">Iron</keyword>
<keyword id="KW-0472">Membrane</keyword>
<keyword id="KW-0479">Metal-binding</keyword>
<keyword id="KW-0496">Mitochondrion</keyword>
<keyword id="KW-0999">Mitochondrion inner membrane</keyword>
<keyword id="KW-1185">Reference proteome</keyword>
<keyword id="KW-0679">Respiratory chain</keyword>
<keyword id="KW-0812">Transmembrane</keyword>
<keyword id="KW-1133">Transmembrane helix</keyword>
<keyword id="KW-0813">Transport</keyword>
<keyword id="KW-0830">Ubiquinone</keyword>
<dbReference type="EMBL" id="AY612638">
    <property type="protein sequence ID" value="AAT11998.1"/>
    <property type="molecule type" value="Genomic_DNA"/>
</dbReference>
<dbReference type="RefSeq" id="YP_026116.1">
    <property type="nucleotide sequence ID" value="NC_005943.1"/>
</dbReference>
<dbReference type="SMR" id="Q6IYG6"/>
<dbReference type="FunCoup" id="Q6IYG6">
    <property type="interactions" value="320"/>
</dbReference>
<dbReference type="PaxDb" id="9544-ENSMMUP00000031372"/>
<dbReference type="Ensembl" id="ENSMMUT00000110406.1">
    <property type="protein sequence ID" value="ENSMMUP00000081249.1"/>
    <property type="gene ID" value="ENSMMUG00000065382.1"/>
</dbReference>
<dbReference type="GeneID" id="2846625"/>
<dbReference type="KEGG" id="mcc:2846625"/>
<dbReference type="CTD" id="4519"/>
<dbReference type="VEuPathDB" id="HostDB:ENSMMUG00000065382"/>
<dbReference type="eggNOG" id="KOG4663">
    <property type="taxonomic scope" value="Eukaryota"/>
</dbReference>
<dbReference type="GeneTree" id="ENSGT00390000017948"/>
<dbReference type="HOGENOM" id="CLU_031114_3_0_1"/>
<dbReference type="InParanoid" id="Q6IYG6"/>
<dbReference type="OMA" id="NISAWWN"/>
<dbReference type="OrthoDB" id="244at2759"/>
<dbReference type="TreeFam" id="TF353088"/>
<dbReference type="Proteomes" id="UP000006718">
    <property type="component" value="Mitochondrion"/>
</dbReference>
<dbReference type="Bgee" id="ENSMMUG00000065382">
    <property type="expression patterns" value="Expressed in colon and 19 other cell types or tissues"/>
</dbReference>
<dbReference type="GO" id="GO:0016020">
    <property type="term" value="C:membrane"/>
    <property type="evidence" value="ECO:0000318"/>
    <property type="project" value="GO_Central"/>
</dbReference>
<dbReference type="GO" id="GO:0005743">
    <property type="term" value="C:mitochondrial inner membrane"/>
    <property type="evidence" value="ECO:0007669"/>
    <property type="project" value="UniProtKB-SubCell"/>
</dbReference>
<dbReference type="GO" id="GO:0045275">
    <property type="term" value="C:respiratory chain complex III"/>
    <property type="evidence" value="ECO:0000318"/>
    <property type="project" value="GO_Central"/>
</dbReference>
<dbReference type="GO" id="GO:0046872">
    <property type="term" value="F:metal ion binding"/>
    <property type="evidence" value="ECO:0007669"/>
    <property type="project" value="UniProtKB-KW"/>
</dbReference>
<dbReference type="GO" id="GO:0008121">
    <property type="term" value="F:ubiquinol-cytochrome-c reductase activity"/>
    <property type="evidence" value="ECO:0007669"/>
    <property type="project" value="InterPro"/>
</dbReference>
<dbReference type="GO" id="GO:0006122">
    <property type="term" value="P:mitochondrial electron transport, ubiquinol to cytochrome c"/>
    <property type="evidence" value="ECO:0000318"/>
    <property type="project" value="GO_Central"/>
</dbReference>
<dbReference type="CDD" id="cd00290">
    <property type="entry name" value="cytochrome_b_C"/>
    <property type="match status" value="1"/>
</dbReference>
<dbReference type="CDD" id="cd00284">
    <property type="entry name" value="Cytochrome_b_N"/>
    <property type="match status" value="1"/>
</dbReference>
<dbReference type="FunFam" id="1.20.810.10:FF:000002">
    <property type="entry name" value="Cytochrome b"/>
    <property type="match status" value="1"/>
</dbReference>
<dbReference type="Gene3D" id="1.20.810.10">
    <property type="entry name" value="Cytochrome Bc1 Complex, Chain C"/>
    <property type="match status" value="1"/>
</dbReference>
<dbReference type="InterPro" id="IPR005798">
    <property type="entry name" value="Cyt_b/b6_C"/>
</dbReference>
<dbReference type="InterPro" id="IPR036150">
    <property type="entry name" value="Cyt_b/b6_C_sf"/>
</dbReference>
<dbReference type="InterPro" id="IPR005797">
    <property type="entry name" value="Cyt_b/b6_N"/>
</dbReference>
<dbReference type="InterPro" id="IPR027387">
    <property type="entry name" value="Cytb/b6-like_sf"/>
</dbReference>
<dbReference type="InterPro" id="IPR030689">
    <property type="entry name" value="Cytochrome_b"/>
</dbReference>
<dbReference type="InterPro" id="IPR048260">
    <property type="entry name" value="Cytochrome_b_C_euk/bac"/>
</dbReference>
<dbReference type="InterPro" id="IPR048259">
    <property type="entry name" value="Cytochrome_b_N_euk/bac"/>
</dbReference>
<dbReference type="InterPro" id="IPR016174">
    <property type="entry name" value="Di-haem_cyt_TM"/>
</dbReference>
<dbReference type="PANTHER" id="PTHR19271">
    <property type="entry name" value="CYTOCHROME B"/>
    <property type="match status" value="1"/>
</dbReference>
<dbReference type="PANTHER" id="PTHR19271:SF16">
    <property type="entry name" value="CYTOCHROME B"/>
    <property type="match status" value="1"/>
</dbReference>
<dbReference type="Pfam" id="PF00032">
    <property type="entry name" value="Cytochrom_B_C"/>
    <property type="match status" value="1"/>
</dbReference>
<dbReference type="Pfam" id="PF00033">
    <property type="entry name" value="Cytochrome_B"/>
    <property type="match status" value="1"/>
</dbReference>
<dbReference type="PIRSF" id="PIRSF038885">
    <property type="entry name" value="COB"/>
    <property type="match status" value="1"/>
</dbReference>
<dbReference type="SUPFAM" id="SSF81648">
    <property type="entry name" value="a domain/subunit of cytochrome bc1 complex (Ubiquinol-cytochrome c reductase)"/>
    <property type="match status" value="1"/>
</dbReference>
<dbReference type="SUPFAM" id="SSF81342">
    <property type="entry name" value="Transmembrane di-heme cytochromes"/>
    <property type="match status" value="1"/>
</dbReference>
<dbReference type="PROSITE" id="PS51003">
    <property type="entry name" value="CYTB_CTER"/>
    <property type="match status" value="1"/>
</dbReference>
<dbReference type="PROSITE" id="PS51002">
    <property type="entry name" value="CYTB_NTER"/>
    <property type="match status" value="1"/>
</dbReference>
<name>CYB_MACMU</name>